<sequence>NGRCCHPACAKYFSCGR</sequence>
<protein>
    <recommendedName>
        <fullName>Alpha-conotoxin-like Mn1.4</fullName>
    </recommendedName>
</protein>
<accession>P0C8U5</accession>
<reference key="1">
    <citation type="journal article" date="2006" name="J. Biol. Chem.">
        <title>Conus peptides: biodiversity-based discovery and exogenomics.</title>
        <authorList>
            <person name="Olivera B.M."/>
        </authorList>
    </citation>
    <scope>NUCLEOTIDE SEQUENCE [MRNA]</scope>
    <scope>REVIEW</scope>
    <source>
        <tissue>Venom duct</tissue>
    </source>
</reference>
<name>CA14_CONMN</name>
<evidence type="ECO:0000250" key="1"/>
<evidence type="ECO:0000250" key="2">
    <source>
        <dbReference type="UniProtKB" id="P01519"/>
    </source>
</evidence>
<evidence type="ECO:0000305" key="3"/>
<proteinExistence type="evidence at transcript level"/>
<comment type="function">
    <text evidence="1">Alpha-conotoxins act on postsynaptic membranes, they bind to the nicotinic acetylcholine receptors (nAChR) and thus inhibit them.</text>
</comment>
<comment type="subcellular location">
    <subcellularLocation>
        <location evidence="1">Secreted</location>
    </subcellularLocation>
</comment>
<comment type="tissue specificity">
    <text>Expressed by the venom duct.</text>
</comment>
<comment type="domain">
    <text>The cysteine framework is I (CC-C-C). Alpha3/5 pattern.</text>
</comment>
<comment type="similarity">
    <text evidence="3">Belongs to the conotoxin A superfamily.</text>
</comment>
<organism>
    <name type="scientific">Conus monachus</name>
    <name type="common">Cone snail</name>
    <dbReference type="NCBI Taxonomy" id="89446"/>
    <lineage>
        <taxon>Eukaryota</taxon>
        <taxon>Metazoa</taxon>
        <taxon>Spiralia</taxon>
        <taxon>Lophotrochozoa</taxon>
        <taxon>Mollusca</taxon>
        <taxon>Gastropoda</taxon>
        <taxon>Caenogastropoda</taxon>
        <taxon>Neogastropoda</taxon>
        <taxon>Conoidea</taxon>
        <taxon>Conidae</taxon>
        <taxon>Conus</taxon>
        <taxon>Pionoconus</taxon>
    </lineage>
</organism>
<feature type="propeptide" id="PRO_0000366056">
    <location>
        <begin position="1" status="less than"/>
        <end position="1"/>
    </location>
</feature>
<feature type="peptide" id="PRO_0000366057" description="Alpha-conotoxin-like Mn1.4">
    <location>
        <begin position="2"/>
        <end position="15"/>
    </location>
</feature>
<feature type="modified residue" description="Cysteine amide" evidence="1">
    <location>
        <position position="15"/>
    </location>
</feature>
<feature type="disulfide bond" evidence="2">
    <location>
        <begin position="4"/>
        <end position="9"/>
    </location>
</feature>
<feature type="disulfide bond" evidence="2">
    <location>
        <begin position="5"/>
        <end position="15"/>
    </location>
</feature>
<feature type="non-terminal residue">
    <location>
        <position position="1"/>
    </location>
</feature>
<keyword id="KW-0008">Acetylcholine receptor inhibiting toxin</keyword>
<keyword id="KW-0027">Amidation</keyword>
<keyword id="KW-1015">Disulfide bond</keyword>
<keyword id="KW-0872">Ion channel impairing toxin</keyword>
<keyword id="KW-0528">Neurotoxin</keyword>
<keyword id="KW-0629">Postsynaptic neurotoxin</keyword>
<keyword id="KW-0964">Secreted</keyword>
<keyword id="KW-0800">Toxin</keyword>
<dbReference type="ConoServer" id="3637">
    <property type="toxin name" value="Mn1.4 precursor"/>
</dbReference>
<dbReference type="GO" id="GO:0005576">
    <property type="term" value="C:extracellular region"/>
    <property type="evidence" value="ECO:0007669"/>
    <property type="project" value="UniProtKB-SubCell"/>
</dbReference>
<dbReference type="GO" id="GO:0035792">
    <property type="term" value="C:host cell postsynaptic membrane"/>
    <property type="evidence" value="ECO:0007669"/>
    <property type="project" value="UniProtKB-KW"/>
</dbReference>
<dbReference type="GO" id="GO:0030550">
    <property type="term" value="F:acetylcholine receptor inhibitor activity"/>
    <property type="evidence" value="ECO:0007669"/>
    <property type="project" value="UniProtKB-KW"/>
</dbReference>
<dbReference type="GO" id="GO:0099106">
    <property type="term" value="F:ion channel regulator activity"/>
    <property type="evidence" value="ECO:0007669"/>
    <property type="project" value="UniProtKB-KW"/>
</dbReference>
<dbReference type="GO" id="GO:0090729">
    <property type="term" value="F:toxin activity"/>
    <property type="evidence" value="ECO:0007669"/>
    <property type="project" value="UniProtKB-KW"/>
</dbReference>
<dbReference type="InterPro" id="IPR018072">
    <property type="entry name" value="Conotoxin_a-typ_CS"/>
</dbReference>
<dbReference type="PROSITE" id="PS60014">
    <property type="entry name" value="ALPHA_CONOTOXIN"/>
    <property type="match status" value="1"/>
</dbReference>